<name>GLMM_ECO45</name>
<proteinExistence type="inferred from homology"/>
<gene>
    <name evidence="1" type="primary">glmM</name>
    <name type="ordered locus">ECS88_3558</name>
</gene>
<feature type="chain" id="PRO_1000201095" description="Phosphoglucosamine mutase">
    <location>
        <begin position="1"/>
        <end position="445"/>
    </location>
</feature>
<feature type="active site" description="Phosphoserine intermediate" evidence="1">
    <location>
        <position position="102"/>
    </location>
</feature>
<feature type="binding site" description="via phosphate group" evidence="1">
    <location>
        <position position="102"/>
    </location>
    <ligand>
        <name>Mg(2+)</name>
        <dbReference type="ChEBI" id="CHEBI:18420"/>
    </ligand>
</feature>
<feature type="binding site" evidence="1">
    <location>
        <position position="241"/>
    </location>
    <ligand>
        <name>Mg(2+)</name>
        <dbReference type="ChEBI" id="CHEBI:18420"/>
    </ligand>
</feature>
<feature type="binding site" evidence="1">
    <location>
        <position position="243"/>
    </location>
    <ligand>
        <name>Mg(2+)</name>
        <dbReference type="ChEBI" id="CHEBI:18420"/>
    </ligand>
</feature>
<feature type="binding site" evidence="1">
    <location>
        <position position="245"/>
    </location>
    <ligand>
        <name>Mg(2+)</name>
        <dbReference type="ChEBI" id="CHEBI:18420"/>
    </ligand>
</feature>
<feature type="modified residue" description="Phosphoserine" evidence="1">
    <location>
        <position position="102"/>
    </location>
</feature>
<keyword id="KW-0413">Isomerase</keyword>
<keyword id="KW-0460">Magnesium</keyword>
<keyword id="KW-0479">Metal-binding</keyword>
<keyword id="KW-0597">Phosphoprotein</keyword>
<keyword id="KW-1185">Reference proteome</keyword>
<dbReference type="EC" id="5.4.2.10" evidence="1"/>
<dbReference type="EMBL" id="CU928161">
    <property type="protein sequence ID" value="CAR04786.1"/>
    <property type="molecule type" value="Genomic_DNA"/>
</dbReference>
<dbReference type="RefSeq" id="WP_000071137.1">
    <property type="nucleotide sequence ID" value="NC_011742.1"/>
</dbReference>
<dbReference type="SMR" id="B7MB95"/>
<dbReference type="GeneID" id="93778805"/>
<dbReference type="KEGG" id="ecz:ECS88_3558"/>
<dbReference type="HOGENOM" id="CLU_016950_7_0_6"/>
<dbReference type="Proteomes" id="UP000000747">
    <property type="component" value="Chromosome"/>
</dbReference>
<dbReference type="GO" id="GO:0005829">
    <property type="term" value="C:cytosol"/>
    <property type="evidence" value="ECO:0007669"/>
    <property type="project" value="TreeGrafter"/>
</dbReference>
<dbReference type="GO" id="GO:0000287">
    <property type="term" value="F:magnesium ion binding"/>
    <property type="evidence" value="ECO:0007669"/>
    <property type="project" value="UniProtKB-UniRule"/>
</dbReference>
<dbReference type="GO" id="GO:0008966">
    <property type="term" value="F:phosphoglucosamine mutase activity"/>
    <property type="evidence" value="ECO:0007669"/>
    <property type="project" value="UniProtKB-UniRule"/>
</dbReference>
<dbReference type="GO" id="GO:0004615">
    <property type="term" value="F:phosphomannomutase activity"/>
    <property type="evidence" value="ECO:0007669"/>
    <property type="project" value="TreeGrafter"/>
</dbReference>
<dbReference type="GO" id="GO:0005975">
    <property type="term" value="P:carbohydrate metabolic process"/>
    <property type="evidence" value="ECO:0007669"/>
    <property type="project" value="InterPro"/>
</dbReference>
<dbReference type="GO" id="GO:0009252">
    <property type="term" value="P:peptidoglycan biosynthetic process"/>
    <property type="evidence" value="ECO:0007669"/>
    <property type="project" value="TreeGrafter"/>
</dbReference>
<dbReference type="GO" id="GO:0006048">
    <property type="term" value="P:UDP-N-acetylglucosamine biosynthetic process"/>
    <property type="evidence" value="ECO:0007669"/>
    <property type="project" value="TreeGrafter"/>
</dbReference>
<dbReference type="CDD" id="cd05802">
    <property type="entry name" value="GlmM"/>
    <property type="match status" value="1"/>
</dbReference>
<dbReference type="FunFam" id="3.30.310.50:FF:000001">
    <property type="entry name" value="Phosphoglucosamine mutase"/>
    <property type="match status" value="1"/>
</dbReference>
<dbReference type="FunFam" id="3.40.120.10:FF:000001">
    <property type="entry name" value="Phosphoglucosamine mutase"/>
    <property type="match status" value="1"/>
</dbReference>
<dbReference type="FunFam" id="3.40.120.10:FF:000002">
    <property type="entry name" value="Phosphoglucosamine mutase"/>
    <property type="match status" value="1"/>
</dbReference>
<dbReference type="Gene3D" id="3.40.120.10">
    <property type="entry name" value="Alpha-D-Glucose-1,6-Bisphosphate, subunit A, domain 3"/>
    <property type="match status" value="3"/>
</dbReference>
<dbReference type="Gene3D" id="3.30.310.50">
    <property type="entry name" value="Alpha-D-phosphohexomutase, C-terminal domain"/>
    <property type="match status" value="1"/>
</dbReference>
<dbReference type="HAMAP" id="MF_01554_B">
    <property type="entry name" value="GlmM_B"/>
    <property type="match status" value="1"/>
</dbReference>
<dbReference type="InterPro" id="IPR005844">
    <property type="entry name" value="A-D-PHexomutase_a/b/a-I"/>
</dbReference>
<dbReference type="InterPro" id="IPR016055">
    <property type="entry name" value="A-D-PHexomutase_a/b/a-I/II/III"/>
</dbReference>
<dbReference type="InterPro" id="IPR005845">
    <property type="entry name" value="A-D-PHexomutase_a/b/a-II"/>
</dbReference>
<dbReference type="InterPro" id="IPR005846">
    <property type="entry name" value="A-D-PHexomutase_a/b/a-III"/>
</dbReference>
<dbReference type="InterPro" id="IPR005843">
    <property type="entry name" value="A-D-PHexomutase_C"/>
</dbReference>
<dbReference type="InterPro" id="IPR036900">
    <property type="entry name" value="A-D-PHexomutase_C_sf"/>
</dbReference>
<dbReference type="InterPro" id="IPR016066">
    <property type="entry name" value="A-D-PHexomutase_CS"/>
</dbReference>
<dbReference type="InterPro" id="IPR005841">
    <property type="entry name" value="Alpha-D-phosphohexomutase_SF"/>
</dbReference>
<dbReference type="InterPro" id="IPR006352">
    <property type="entry name" value="GlmM_bact"/>
</dbReference>
<dbReference type="InterPro" id="IPR050060">
    <property type="entry name" value="Phosphoglucosamine_mutase"/>
</dbReference>
<dbReference type="NCBIfam" id="TIGR01455">
    <property type="entry name" value="glmM"/>
    <property type="match status" value="1"/>
</dbReference>
<dbReference type="NCBIfam" id="NF008139">
    <property type="entry name" value="PRK10887.1"/>
    <property type="match status" value="1"/>
</dbReference>
<dbReference type="PANTHER" id="PTHR42946:SF1">
    <property type="entry name" value="PHOSPHOGLUCOMUTASE (ALPHA-D-GLUCOSE-1,6-BISPHOSPHATE-DEPENDENT)"/>
    <property type="match status" value="1"/>
</dbReference>
<dbReference type="PANTHER" id="PTHR42946">
    <property type="entry name" value="PHOSPHOHEXOSE MUTASE"/>
    <property type="match status" value="1"/>
</dbReference>
<dbReference type="Pfam" id="PF02878">
    <property type="entry name" value="PGM_PMM_I"/>
    <property type="match status" value="1"/>
</dbReference>
<dbReference type="Pfam" id="PF02879">
    <property type="entry name" value="PGM_PMM_II"/>
    <property type="match status" value="1"/>
</dbReference>
<dbReference type="Pfam" id="PF02880">
    <property type="entry name" value="PGM_PMM_III"/>
    <property type="match status" value="1"/>
</dbReference>
<dbReference type="Pfam" id="PF00408">
    <property type="entry name" value="PGM_PMM_IV"/>
    <property type="match status" value="1"/>
</dbReference>
<dbReference type="PRINTS" id="PR00509">
    <property type="entry name" value="PGMPMM"/>
</dbReference>
<dbReference type="SUPFAM" id="SSF55957">
    <property type="entry name" value="Phosphoglucomutase, C-terminal domain"/>
    <property type="match status" value="1"/>
</dbReference>
<dbReference type="SUPFAM" id="SSF53738">
    <property type="entry name" value="Phosphoglucomutase, first 3 domains"/>
    <property type="match status" value="3"/>
</dbReference>
<dbReference type="PROSITE" id="PS00710">
    <property type="entry name" value="PGM_PMM"/>
    <property type="match status" value="1"/>
</dbReference>
<accession>B7MB95</accession>
<sequence length="445" mass="47517">MSNRKYFGTDGIRGRVGDAPITPDFVLKLGWAAGKVLARHGSRKIIIGKDTRISGYMLESALEAGLAAAGLSALFTGPMPTPAVAYLTRTFRAEAGIVISASHNPFYDNGIKFFSIDGTKLPDAVEEAIEAEMEKEISCVDSAELGKASRIVDAAGRYIEFCKATFPNELSLSELKIVVDCANGATYHIAPNVLRELGANVIAIGCEPNGVNINAEVGATDVRALQARVLAEKADLGIAFDGDGDRVIMVDHEGNKVDGDQIMYIIAREGLRQGQLRGGAVGTLMSNMGLELALKQLGIPFARAKVGDRYVLEKMQEKGWRIGAENSGHVILLDKTTTGDGIVAGLQVLAAMARNHMSLHDLCSGMKMFPQILVNVRYTAGSGDPLEHESVKAVTAEVEAALGSRGRVLLRKSGTEPLIRVMVEGEDEAQVTEFAHRIADAVKAV</sequence>
<protein>
    <recommendedName>
        <fullName evidence="1">Phosphoglucosamine mutase</fullName>
        <ecNumber evidence="1">5.4.2.10</ecNumber>
    </recommendedName>
</protein>
<evidence type="ECO:0000255" key="1">
    <source>
        <dbReference type="HAMAP-Rule" id="MF_01554"/>
    </source>
</evidence>
<organism>
    <name type="scientific">Escherichia coli O45:K1 (strain S88 / ExPEC)</name>
    <dbReference type="NCBI Taxonomy" id="585035"/>
    <lineage>
        <taxon>Bacteria</taxon>
        <taxon>Pseudomonadati</taxon>
        <taxon>Pseudomonadota</taxon>
        <taxon>Gammaproteobacteria</taxon>
        <taxon>Enterobacterales</taxon>
        <taxon>Enterobacteriaceae</taxon>
        <taxon>Escherichia</taxon>
    </lineage>
</organism>
<reference key="1">
    <citation type="journal article" date="2009" name="PLoS Genet.">
        <title>Organised genome dynamics in the Escherichia coli species results in highly diverse adaptive paths.</title>
        <authorList>
            <person name="Touchon M."/>
            <person name="Hoede C."/>
            <person name="Tenaillon O."/>
            <person name="Barbe V."/>
            <person name="Baeriswyl S."/>
            <person name="Bidet P."/>
            <person name="Bingen E."/>
            <person name="Bonacorsi S."/>
            <person name="Bouchier C."/>
            <person name="Bouvet O."/>
            <person name="Calteau A."/>
            <person name="Chiapello H."/>
            <person name="Clermont O."/>
            <person name="Cruveiller S."/>
            <person name="Danchin A."/>
            <person name="Diard M."/>
            <person name="Dossat C."/>
            <person name="Karoui M.E."/>
            <person name="Frapy E."/>
            <person name="Garry L."/>
            <person name="Ghigo J.M."/>
            <person name="Gilles A.M."/>
            <person name="Johnson J."/>
            <person name="Le Bouguenec C."/>
            <person name="Lescat M."/>
            <person name="Mangenot S."/>
            <person name="Martinez-Jehanne V."/>
            <person name="Matic I."/>
            <person name="Nassif X."/>
            <person name="Oztas S."/>
            <person name="Petit M.A."/>
            <person name="Pichon C."/>
            <person name="Rouy Z."/>
            <person name="Ruf C.S."/>
            <person name="Schneider D."/>
            <person name="Tourret J."/>
            <person name="Vacherie B."/>
            <person name="Vallenet D."/>
            <person name="Medigue C."/>
            <person name="Rocha E.P.C."/>
            <person name="Denamur E."/>
        </authorList>
    </citation>
    <scope>NUCLEOTIDE SEQUENCE [LARGE SCALE GENOMIC DNA]</scope>
    <source>
        <strain>S88 / ExPEC</strain>
    </source>
</reference>
<comment type="function">
    <text evidence="1">Catalyzes the conversion of glucosamine-6-phosphate to glucosamine-1-phosphate.</text>
</comment>
<comment type="catalytic activity">
    <reaction evidence="1">
        <text>alpha-D-glucosamine 1-phosphate = D-glucosamine 6-phosphate</text>
        <dbReference type="Rhea" id="RHEA:23424"/>
        <dbReference type="ChEBI" id="CHEBI:58516"/>
        <dbReference type="ChEBI" id="CHEBI:58725"/>
        <dbReference type="EC" id="5.4.2.10"/>
    </reaction>
</comment>
<comment type="cofactor">
    <cofactor evidence="1">
        <name>Mg(2+)</name>
        <dbReference type="ChEBI" id="CHEBI:18420"/>
    </cofactor>
    <text evidence="1">Binds 1 Mg(2+) ion per subunit.</text>
</comment>
<comment type="PTM">
    <text evidence="1">Activated by phosphorylation.</text>
</comment>
<comment type="similarity">
    <text evidence="1">Belongs to the phosphohexose mutase family.</text>
</comment>